<evidence type="ECO:0000255" key="1">
    <source>
        <dbReference type="HAMAP-Rule" id="MF_01149"/>
    </source>
</evidence>
<feature type="chain" id="PRO_1000085096" description="Uncharacterized MFS-type transporter YcaD">
    <location>
        <begin position="1"/>
        <end position="382"/>
    </location>
</feature>
<feature type="transmembrane region" description="Helical" evidence="1">
    <location>
        <begin position="8"/>
        <end position="28"/>
    </location>
</feature>
<feature type="transmembrane region" description="Helical" evidence="1">
    <location>
        <begin position="45"/>
        <end position="65"/>
    </location>
</feature>
<feature type="transmembrane region" description="Helical" evidence="1">
    <location>
        <begin position="75"/>
        <end position="95"/>
    </location>
</feature>
<feature type="transmembrane region" description="Helical" evidence="1">
    <location>
        <begin position="102"/>
        <end position="122"/>
    </location>
</feature>
<feature type="transmembrane region" description="Helical" evidence="1">
    <location>
        <begin position="131"/>
        <end position="151"/>
    </location>
</feature>
<feature type="transmembrane region" description="Helical" evidence="1">
    <location>
        <begin position="157"/>
        <end position="177"/>
    </location>
</feature>
<feature type="transmembrane region" description="Helical" evidence="1">
    <location>
        <begin position="204"/>
        <end position="224"/>
    </location>
</feature>
<feature type="transmembrane region" description="Helical" evidence="1">
    <location>
        <begin position="231"/>
        <end position="251"/>
    </location>
</feature>
<feature type="transmembrane region" description="Helical" evidence="1">
    <location>
        <begin position="270"/>
        <end position="290"/>
    </location>
</feature>
<feature type="transmembrane region" description="Helical" evidence="1">
    <location>
        <begin position="291"/>
        <end position="311"/>
    </location>
</feature>
<feature type="transmembrane region" description="Helical" evidence="1">
    <location>
        <begin position="325"/>
        <end position="345"/>
    </location>
</feature>
<feature type="transmembrane region" description="Helical" evidence="1">
    <location>
        <begin position="349"/>
        <end position="369"/>
    </location>
</feature>
<sequence>MSTYTRPVMLLLCGLLLLTLAIAVLNTLVPLWLAQANLPTWQVGMVSSSYFTGNLVGTLFTGYLIKRIGFNHSYYLASLIFAAGCVGLGVMVGFWSWMSWRFIAGIGCAMIWVVVESALMCSGTSHNRGRLLAAYMMVYYMGTFLGQLLVSKVSGELLHVLPWVTGMILAGILPLLFTRIVNQQTQARHSSSISAMLKLRQARLGVNGCIISGIVLGSLYGLMPLYLKHQGMANASIGFWMAVLVSAGILGQWPMGRLADKFGRLLVLRVQVFVVILGSIAMLTQAAMAPALFILGAAGFTLYPVAMAWACEKVEHHQLVAMNQALLLSYTVGSLLGPSFAAMLMQNYSDNLLFIMIASVSFIYLLMLLRNAGQTPNPVAHI</sequence>
<accession>A9N7X0</accession>
<gene>
    <name evidence="1" type="primary">ycaD</name>
    <name type="ordered locus">SPAB_02553</name>
</gene>
<name>YCAD_SALPB</name>
<reference key="1">
    <citation type="submission" date="2007-11" db="EMBL/GenBank/DDBJ databases">
        <authorList>
            <consortium name="The Salmonella enterica serovar Paratyphi B Genome Sequencing Project"/>
            <person name="McClelland M."/>
            <person name="Sanderson E.K."/>
            <person name="Porwollik S."/>
            <person name="Spieth J."/>
            <person name="Clifton W.S."/>
            <person name="Fulton R."/>
            <person name="Cordes M."/>
            <person name="Wollam A."/>
            <person name="Shah N."/>
            <person name="Pepin K."/>
            <person name="Bhonagiri V."/>
            <person name="Nash W."/>
            <person name="Johnson M."/>
            <person name="Thiruvilangam P."/>
            <person name="Wilson R."/>
        </authorList>
    </citation>
    <scope>NUCLEOTIDE SEQUENCE [LARGE SCALE GENOMIC DNA]</scope>
    <source>
        <strain>ATCC BAA-1250 / SPB7</strain>
    </source>
</reference>
<comment type="subcellular location">
    <subcellularLocation>
        <location evidence="1">Cell inner membrane</location>
        <topology evidence="1">Multi-pass membrane protein</topology>
    </subcellularLocation>
</comment>
<comment type="similarity">
    <text evidence="1">Belongs to the major facilitator superfamily. YcaD (TC 2.A.1.26) family.</text>
</comment>
<keyword id="KW-0997">Cell inner membrane</keyword>
<keyword id="KW-1003">Cell membrane</keyword>
<keyword id="KW-0472">Membrane</keyword>
<keyword id="KW-0812">Transmembrane</keyword>
<keyword id="KW-1133">Transmembrane helix</keyword>
<keyword id="KW-0813">Transport</keyword>
<dbReference type="EMBL" id="CP000886">
    <property type="protein sequence ID" value="ABX67933.1"/>
    <property type="molecule type" value="Genomic_DNA"/>
</dbReference>
<dbReference type="RefSeq" id="WP_000109264.1">
    <property type="nucleotide sequence ID" value="NC_010102.1"/>
</dbReference>
<dbReference type="SMR" id="A9N7X0"/>
<dbReference type="KEGG" id="spq:SPAB_02553"/>
<dbReference type="PATRIC" id="fig|1016998.12.peg.2416"/>
<dbReference type="HOGENOM" id="CLU_035018_1_2_6"/>
<dbReference type="BioCyc" id="SENT1016998:SPAB_RS10365-MONOMER"/>
<dbReference type="Proteomes" id="UP000008556">
    <property type="component" value="Chromosome"/>
</dbReference>
<dbReference type="GO" id="GO:0005886">
    <property type="term" value="C:plasma membrane"/>
    <property type="evidence" value="ECO:0007669"/>
    <property type="project" value="UniProtKB-SubCell"/>
</dbReference>
<dbReference type="GO" id="GO:0022857">
    <property type="term" value="F:transmembrane transporter activity"/>
    <property type="evidence" value="ECO:0007669"/>
    <property type="project" value="UniProtKB-UniRule"/>
</dbReference>
<dbReference type="CDD" id="cd17477">
    <property type="entry name" value="MFS_YcaD_like"/>
    <property type="match status" value="1"/>
</dbReference>
<dbReference type="FunFam" id="1.20.1250.20:FF:000041">
    <property type="entry name" value="Uncharacterized MFS-type transporter YcaD"/>
    <property type="match status" value="1"/>
</dbReference>
<dbReference type="FunFam" id="1.20.1250.20:FF:000066">
    <property type="entry name" value="Uncharacterized MFS-type transporter YcaD"/>
    <property type="match status" value="1"/>
</dbReference>
<dbReference type="Gene3D" id="1.20.1250.20">
    <property type="entry name" value="MFS general substrate transporter like domains"/>
    <property type="match status" value="2"/>
</dbReference>
<dbReference type="HAMAP" id="MF_01149">
    <property type="entry name" value="MFS_YcaD"/>
    <property type="match status" value="1"/>
</dbReference>
<dbReference type="InterPro" id="IPR011701">
    <property type="entry name" value="MFS"/>
</dbReference>
<dbReference type="InterPro" id="IPR020846">
    <property type="entry name" value="MFS_dom"/>
</dbReference>
<dbReference type="InterPro" id="IPR036259">
    <property type="entry name" value="MFS_trans_sf"/>
</dbReference>
<dbReference type="InterPro" id="IPR023745">
    <property type="entry name" value="MFS_YcaD"/>
</dbReference>
<dbReference type="InterPro" id="IPR047200">
    <property type="entry name" value="MFS_YcaD-like"/>
</dbReference>
<dbReference type="NCBIfam" id="NF002962">
    <property type="entry name" value="PRK03633.1"/>
    <property type="match status" value="1"/>
</dbReference>
<dbReference type="PANTHER" id="PTHR23521">
    <property type="entry name" value="TRANSPORTER MFS SUPERFAMILY"/>
    <property type="match status" value="1"/>
</dbReference>
<dbReference type="PANTHER" id="PTHR23521:SF2">
    <property type="entry name" value="TRANSPORTER MFS SUPERFAMILY"/>
    <property type="match status" value="1"/>
</dbReference>
<dbReference type="Pfam" id="PF07690">
    <property type="entry name" value="MFS_1"/>
    <property type="match status" value="1"/>
</dbReference>
<dbReference type="SUPFAM" id="SSF103473">
    <property type="entry name" value="MFS general substrate transporter"/>
    <property type="match status" value="1"/>
</dbReference>
<dbReference type="PROSITE" id="PS50850">
    <property type="entry name" value="MFS"/>
    <property type="match status" value="1"/>
</dbReference>
<protein>
    <recommendedName>
        <fullName evidence="1">Uncharacterized MFS-type transporter YcaD</fullName>
    </recommendedName>
</protein>
<proteinExistence type="inferred from homology"/>
<organism>
    <name type="scientific">Salmonella paratyphi B (strain ATCC BAA-1250 / SPB7)</name>
    <dbReference type="NCBI Taxonomy" id="1016998"/>
    <lineage>
        <taxon>Bacteria</taxon>
        <taxon>Pseudomonadati</taxon>
        <taxon>Pseudomonadota</taxon>
        <taxon>Gammaproteobacteria</taxon>
        <taxon>Enterobacterales</taxon>
        <taxon>Enterobacteriaceae</taxon>
        <taxon>Salmonella</taxon>
    </lineage>
</organism>